<gene>
    <name evidence="1" type="primary">pcm</name>
    <name type="ordered locus">BB3019</name>
</gene>
<accession>Q7WI37</accession>
<comment type="function">
    <text evidence="1">Catalyzes the methyl esterification of L-isoaspartyl residues in peptides and proteins that result from spontaneous decomposition of normal L-aspartyl and L-asparaginyl residues. It plays a role in the repair and/or degradation of damaged proteins.</text>
</comment>
<comment type="catalytic activity">
    <reaction evidence="1">
        <text>[protein]-L-isoaspartate + S-adenosyl-L-methionine = [protein]-L-isoaspartate alpha-methyl ester + S-adenosyl-L-homocysteine</text>
        <dbReference type="Rhea" id="RHEA:12705"/>
        <dbReference type="Rhea" id="RHEA-COMP:12143"/>
        <dbReference type="Rhea" id="RHEA-COMP:12144"/>
        <dbReference type="ChEBI" id="CHEBI:57856"/>
        <dbReference type="ChEBI" id="CHEBI:59789"/>
        <dbReference type="ChEBI" id="CHEBI:90596"/>
        <dbReference type="ChEBI" id="CHEBI:90598"/>
        <dbReference type="EC" id="2.1.1.77"/>
    </reaction>
</comment>
<comment type="subcellular location">
    <subcellularLocation>
        <location evidence="1">Cytoplasm</location>
    </subcellularLocation>
</comment>
<comment type="similarity">
    <text evidence="1">Belongs to the methyltransferase superfamily. L-isoaspartyl/D-aspartyl protein methyltransferase family.</text>
</comment>
<comment type="sequence caution" evidence="3">
    <conflict type="erroneous initiation">
        <sequence resource="EMBL-CDS" id="CAE33511"/>
    </conflict>
</comment>
<sequence>MRKRVDPPAGGRLAPGITPANSNTRISAGALPRAPAQPAPLASGNLGLNSDRLRQAMVQRLRTQGIVDERVLNAMAAVPRHLFVDEALASRAYEDAALPIGHSQTISQPWVVARMIAAVCEDRAPARVLEVGAGCGYQAAVLAQIVREVHAIERIRGLYELARGHLRALRLATRVRLIHGDGMLGVPGVAPFDAIVVAAAGLAIPQALLDQLAPGGRLIAPEGSTHQRLVLIERTGATAWSRKELEAVRFVPLRAGIQS</sequence>
<dbReference type="EC" id="2.1.1.77" evidence="1"/>
<dbReference type="EMBL" id="BX640446">
    <property type="protein sequence ID" value="CAE33511.1"/>
    <property type="status" value="ALT_INIT"/>
    <property type="molecule type" value="Genomic_DNA"/>
</dbReference>
<dbReference type="RefSeq" id="WP_010928874.1">
    <property type="nucleotide sequence ID" value="NC_002927.3"/>
</dbReference>
<dbReference type="SMR" id="Q7WI37"/>
<dbReference type="KEGG" id="bbr:BB3019"/>
<dbReference type="eggNOG" id="COG2518">
    <property type="taxonomic scope" value="Bacteria"/>
</dbReference>
<dbReference type="HOGENOM" id="CLU_055432_1_0_4"/>
<dbReference type="Proteomes" id="UP000001027">
    <property type="component" value="Chromosome"/>
</dbReference>
<dbReference type="GO" id="GO:0005737">
    <property type="term" value="C:cytoplasm"/>
    <property type="evidence" value="ECO:0007669"/>
    <property type="project" value="UniProtKB-SubCell"/>
</dbReference>
<dbReference type="GO" id="GO:0004719">
    <property type="term" value="F:protein-L-isoaspartate (D-aspartate) O-methyltransferase activity"/>
    <property type="evidence" value="ECO:0007669"/>
    <property type="project" value="UniProtKB-UniRule"/>
</dbReference>
<dbReference type="GO" id="GO:0032259">
    <property type="term" value="P:methylation"/>
    <property type="evidence" value="ECO:0007669"/>
    <property type="project" value="UniProtKB-KW"/>
</dbReference>
<dbReference type="GO" id="GO:0036211">
    <property type="term" value="P:protein modification process"/>
    <property type="evidence" value="ECO:0007669"/>
    <property type="project" value="UniProtKB-UniRule"/>
</dbReference>
<dbReference type="GO" id="GO:0030091">
    <property type="term" value="P:protein repair"/>
    <property type="evidence" value="ECO:0007669"/>
    <property type="project" value="UniProtKB-UniRule"/>
</dbReference>
<dbReference type="CDD" id="cd02440">
    <property type="entry name" value="AdoMet_MTases"/>
    <property type="match status" value="1"/>
</dbReference>
<dbReference type="FunFam" id="3.40.50.150:FF:000010">
    <property type="entry name" value="Protein-L-isoaspartate O-methyltransferase"/>
    <property type="match status" value="1"/>
</dbReference>
<dbReference type="Gene3D" id="3.40.50.150">
    <property type="entry name" value="Vaccinia Virus protein VP39"/>
    <property type="match status" value="1"/>
</dbReference>
<dbReference type="HAMAP" id="MF_00090">
    <property type="entry name" value="PIMT"/>
    <property type="match status" value="1"/>
</dbReference>
<dbReference type="InterPro" id="IPR000682">
    <property type="entry name" value="PCMT"/>
</dbReference>
<dbReference type="InterPro" id="IPR029063">
    <property type="entry name" value="SAM-dependent_MTases_sf"/>
</dbReference>
<dbReference type="NCBIfam" id="TIGR00080">
    <property type="entry name" value="pimt"/>
    <property type="match status" value="1"/>
</dbReference>
<dbReference type="NCBIfam" id="NF001453">
    <property type="entry name" value="PRK00312.1"/>
    <property type="match status" value="1"/>
</dbReference>
<dbReference type="PANTHER" id="PTHR11579">
    <property type="entry name" value="PROTEIN-L-ISOASPARTATE O-METHYLTRANSFERASE"/>
    <property type="match status" value="1"/>
</dbReference>
<dbReference type="PANTHER" id="PTHR11579:SF0">
    <property type="entry name" value="PROTEIN-L-ISOASPARTATE(D-ASPARTATE) O-METHYLTRANSFERASE"/>
    <property type="match status" value="1"/>
</dbReference>
<dbReference type="Pfam" id="PF01135">
    <property type="entry name" value="PCMT"/>
    <property type="match status" value="1"/>
</dbReference>
<dbReference type="SUPFAM" id="SSF53335">
    <property type="entry name" value="S-adenosyl-L-methionine-dependent methyltransferases"/>
    <property type="match status" value="1"/>
</dbReference>
<dbReference type="PROSITE" id="PS01279">
    <property type="entry name" value="PCMT"/>
    <property type="match status" value="1"/>
</dbReference>
<organism>
    <name type="scientific">Bordetella bronchiseptica (strain ATCC BAA-588 / NCTC 13252 / RB50)</name>
    <name type="common">Alcaligenes bronchisepticus</name>
    <dbReference type="NCBI Taxonomy" id="257310"/>
    <lineage>
        <taxon>Bacteria</taxon>
        <taxon>Pseudomonadati</taxon>
        <taxon>Pseudomonadota</taxon>
        <taxon>Betaproteobacteria</taxon>
        <taxon>Burkholderiales</taxon>
        <taxon>Alcaligenaceae</taxon>
        <taxon>Bordetella</taxon>
    </lineage>
</organism>
<keyword id="KW-0963">Cytoplasm</keyword>
<keyword id="KW-0489">Methyltransferase</keyword>
<keyword id="KW-0949">S-adenosyl-L-methionine</keyword>
<keyword id="KW-0808">Transferase</keyword>
<reference key="1">
    <citation type="journal article" date="2003" name="Nat. Genet.">
        <title>Comparative analysis of the genome sequences of Bordetella pertussis, Bordetella parapertussis and Bordetella bronchiseptica.</title>
        <authorList>
            <person name="Parkhill J."/>
            <person name="Sebaihia M."/>
            <person name="Preston A."/>
            <person name="Murphy L.D."/>
            <person name="Thomson N.R."/>
            <person name="Harris D.E."/>
            <person name="Holden M.T.G."/>
            <person name="Churcher C.M."/>
            <person name="Bentley S.D."/>
            <person name="Mungall K.L."/>
            <person name="Cerdeno-Tarraga A.-M."/>
            <person name="Temple L."/>
            <person name="James K.D."/>
            <person name="Harris B."/>
            <person name="Quail M.A."/>
            <person name="Achtman M."/>
            <person name="Atkin R."/>
            <person name="Baker S."/>
            <person name="Basham D."/>
            <person name="Bason N."/>
            <person name="Cherevach I."/>
            <person name="Chillingworth T."/>
            <person name="Collins M."/>
            <person name="Cronin A."/>
            <person name="Davis P."/>
            <person name="Doggett J."/>
            <person name="Feltwell T."/>
            <person name="Goble A."/>
            <person name="Hamlin N."/>
            <person name="Hauser H."/>
            <person name="Holroyd S."/>
            <person name="Jagels K."/>
            <person name="Leather S."/>
            <person name="Moule S."/>
            <person name="Norberczak H."/>
            <person name="O'Neil S."/>
            <person name="Ormond D."/>
            <person name="Price C."/>
            <person name="Rabbinowitsch E."/>
            <person name="Rutter S."/>
            <person name="Sanders M."/>
            <person name="Saunders D."/>
            <person name="Seeger K."/>
            <person name="Sharp S."/>
            <person name="Simmonds M."/>
            <person name="Skelton J."/>
            <person name="Squares R."/>
            <person name="Squares S."/>
            <person name="Stevens K."/>
            <person name="Unwin L."/>
            <person name="Whitehead S."/>
            <person name="Barrell B.G."/>
            <person name="Maskell D.J."/>
        </authorList>
    </citation>
    <scope>NUCLEOTIDE SEQUENCE [LARGE SCALE GENOMIC DNA]</scope>
    <source>
        <strain>ATCC BAA-588 / NCTC 13252 / RB50</strain>
    </source>
</reference>
<name>PIMT_BORBR</name>
<protein>
    <recommendedName>
        <fullName evidence="1">Protein-L-isoaspartate O-methyltransferase</fullName>
        <ecNumber evidence="1">2.1.1.77</ecNumber>
    </recommendedName>
    <alternativeName>
        <fullName evidence="1">L-isoaspartyl protein carboxyl methyltransferase</fullName>
    </alternativeName>
    <alternativeName>
        <fullName evidence="1">Protein L-isoaspartyl methyltransferase</fullName>
    </alternativeName>
    <alternativeName>
        <fullName evidence="1">Protein-beta-aspartate methyltransferase</fullName>
        <shortName evidence="1">PIMT</shortName>
    </alternativeName>
</protein>
<feature type="chain" id="PRO_0000351819" description="Protein-L-isoaspartate O-methyltransferase">
    <location>
        <begin position="1"/>
        <end position="259"/>
    </location>
</feature>
<feature type="region of interest" description="Disordered" evidence="2">
    <location>
        <begin position="1"/>
        <end position="25"/>
    </location>
</feature>
<feature type="active site" evidence="1">
    <location>
        <position position="107"/>
    </location>
</feature>
<evidence type="ECO:0000255" key="1">
    <source>
        <dbReference type="HAMAP-Rule" id="MF_00090"/>
    </source>
</evidence>
<evidence type="ECO:0000256" key="2">
    <source>
        <dbReference type="SAM" id="MobiDB-lite"/>
    </source>
</evidence>
<evidence type="ECO:0000305" key="3"/>
<proteinExistence type="inferred from homology"/>